<protein>
    <recommendedName>
        <fullName evidence="1">Polyribonucleotide nucleotidyltransferase</fullName>
        <ecNumber evidence="1">2.7.7.8</ecNumber>
    </recommendedName>
    <alternativeName>
        <fullName evidence="1">Polynucleotide phosphorylase</fullName>
        <shortName evidence="1">PNPase</shortName>
    </alternativeName>
</protein>
<accession>B8DFZ6</accession>
<feature type="chain" id="PRO_1000185741" description="Polyribonucleotide nucleotidyltransferase">
    <location>
        <begin position="1"/>
        <end position="723"/>
    </location>
</feature>
<feature type="domain" description="KH" evidence="1">
    <location>
        <begin position="555"/>
        <end position="614"/>
    </location>
</feature>
<feature type="domain" description="S1 motif" evidence="1">
    <location>
        <begin position="624"/>
        <end position="692"/>
    </location>
</feature>
<feature type="region of interest" description="Disordered" evidence="2">
    <location>
        <begin position="692"/>
        <end position="723"/>
    </location>
</feature>
<feature type="compositionally biased region" description="Basic and acidic residues" evidence="2">
    <location>
        <begin position="693"/>
        <end position="723"/>
    </location>
</feature>
<feature type="binding site" evidence="1">
    <location>
        <position position="488"/>
    </location>
    <ligand>
        <name>Mg(2+)</name>
        <dbReference type="ChEBI" id="CHEBI:18420"/>
    </ligand>
</feature>
<feature type="binding site" evidence="1">
    <location>
        <position position="494"/>
    </location>
    <ligand>
        <name>Mg(2+)</name>
        <dbReference type="ChEBI" id="CHEBI:18420"/>
    </ligand>
</feature>
<comment type="function">
    <text evidence="1">Involved in mRNA degradation. Catalyzes the phosphorolysis of single-stranded polyribonucleotides processively in the 3'- to 5'-direction.</text>
</comment>
<comment type="catalytic activity">
    <reaction evidence="1">
        <text>RNA(n+1) + phosphate = RNA(n) + a ribonucleoside 5'-diphosphate</text>
        <dbReference type="Rhea" id="RHEA:22096"/>
        <dbReference type="Rhea" id="RHEA-COMP:14527"/>
        <dbReference type="Rhea" id="RHEA-COMP:17342"/>
        <dbReference type="ChEBI" id="CHEBI:43474"/>
        <dbReference type="ChEBI" id="CHEBI:57930"/>
        <dbReference type="ChEBI" id="CHEBI:140395"/>
        <dbReference type="EC" id="2.7.7.8"/>
    </reaction>
</comment>
<comment type="cofactor">
    <cofactor evidence="1">
        <name>Mg(2+)</name>
        <dbReference type="ChEBI" id="CHEBI:18420"/>
    </cofactor>
</comment>
<comment type="subcellular location">
    <subcellularLocation>
        <location evidence="1">Cytoplasm</location>
    </subcellularLocation>
</comment>
<comment type="similarity">
    <text evidence="1">Belongs to the polyribonucleotide nucleotidyltransferase family.</text>
</comment>
<evidence type="ECO:0000255" key="1">
    <source>
        <dbReference type="HAMAP-Rule" id="MF_01595"/>
    </source>
</evidence>
<evidence type="ECO:0000256" key="2">
    <source>
        <dbReference type="SAM" id="MobiDB-lite"/>
    </source>
</evidence>
<name>PNP_LISMH</name>
<keyword id="KW-0963">Cytoplasm</keyword>
<keyword id="KW-0460">Magnesium</keyword>
<keyword id="KW-0479">Metal-binding</keyword>
<keyword id="KW-0548">Nucleotidyltransferase</keyword>
<keyword id="KW-0694">RNA-binding</keyword>
<keyword id="KW-0808">Transferase</keyword>
<proteinExistence type="inferred from homology"/>
<organism>
    <name type="scientific">Listeria monocytogenes serotype 4a (strain HCC23)</name>
    <dbReference type="NCBI Taxonomy" id="552536"/>
    <lineage>
        <taxon>Bacteria</taxon>
        <taxon>Bacillati</taxon>
        <taxon>Bacillota</taxon>
        <taxon>Bacilli</taxon>
        <taxon>Bacillales</taxon>
        <taxon>Listeriaceae</taxon>
        <taxon>Listeria</taxon>
    </lineage>
</organism>
<reference key="1">
    <citation type="journal article" date="2011" name="J. Bacteriol.">
        <title>Genome sequence of lineage III Listeria monocytogenes strain HCC23.</title>
        <authorList>
            <person name="Steele C.L."/>
            <person name="Donaldson J.R."/>
            <person name="Paul D."/>
            <person name="Banes M.M."/>
            <person name="Arick T."/>
            <person name="Bridges S.M."/>
            <person name="Lawrence M.L."/>
        </authorList>
    </citation>
    <scope>NUCLEOTIDE SEQUENCE [LARGE SCALE GENOMIC DNA]</scope>
    <source>
        <strain>HCC23</strain>
    </source>
</reference>
<gene>
    <name evidence="1" type="primary">pnp</name>
    <name type="ordered locus">LMHCC_1239</name>
</gene>
<dbReference type="EC" id="2.7.7.8" evidence="1"/>
<dbReference type="EMBL" id="CP001175">
    <property type="protein sequence ID" value="ACK39586.1"/>
    <property type="molecule type" value="Genomic_DNA"/>
</dbReference>
<dbReference type="RefSeq" id="WP_003727493.1">
    <property type="nucleotide sequence ID" value="NC_011660.1"/>
</dbReference>
<dbReference type="SMR" id="B8DFZ6"/>
<dbReference type="KEGG" id="lmh:LMHCC_1239"/>
<dbReference type="HOGENOM" id="CLU_004217_2_2_9"/>
<dbReference type="GO" id="GO:0005829">
    <property type="term" value="C:cytosol"/>
    <property type="evidence" value="ECO:0007669"/>
    <property type="project" value="TreeGrafter"/>
</dbReference>
<dbReference type="GO" id="GO:0000175">
    <property type="term" value="F:3'-5'-RNA exonuclease activity"/>
    <property type="evidence" value="ECO:0007669"/>
    <property type="project" value="TreeGrafter"/>
</dbReference>
<dbReference type="GO" id="GO:0000287">
    <property type="term" value="F:magnesium ion binding"/>
    <property type="evidence" value="ECO:0007669"/>
    <property type="project" value="UniProtKB-UniRule"/>
</dbReference>
<dbReference type="GO" id="GO:0004654">
    <property type="term" value="F:polyribonucleotide nucleotidyltransferase activity"/>
    <property type="evidence" value="ECO:0007669"/>
    <property type="project" value="UniProtKB-UniRule"/>
</dbReference>
<dbReference type="GO" id="GO:0003723">
    <property type="term" value="F:RNA binding"/>
    <property type="evidence" value="ECO:0007669"/>
    <property type="project" value="UniProtKB-UniRule"/>
</dbReference>
<dbReference type="GO" id="GO:0006402">
    <property type="term" value="P:mRNA catabolic process"/>
    <property type="evidence" value="ECO:0007669"/>
    <property type="project" value="UniProtKB-UniRule"/>
</dbReference>
<dbReference type="GO" id="GO:0006396">
    <property type="term" value="P:RNA processing"/>
    <property type="evidence" value="ECO:0007669"/>
    <property type="project" value="InterPro"/>
</dbReference>
<dbReference type="CDD" id="cd02393">
    <property type="entry name" value="KH-I_PNPase"/>
    <property type="match status" value="1"/>
</dbReference>
<dbReference type="CDD" id="cd11363">
    <property type="entry name" value="RNase_PH_PNPase_1"/>
    <property type="match status" value="1"/>
</dbReference>
<dbReference type="CDD" id="cd11364">
    <property type="entry name" value="RNase_PH_PNPase_2"/>
    <property type="match status" value="1"/>
</dbReference>
<dbReference type="CDD" id="cd04472">
    <property type="entry name" value="S1_PNPase"/>
    <property type="match status" value="1"/>
</dbReference>
<dbReference type="FunFam" id="2.40.50.140:FF:000023">
    <property type="entry name" value="Polyribonucleotide nucleotidyltransferase"/>
    <property type="match status" value="1"/>
</dbReference>
<dbReference type="FunFam" id="3.30.1370.10:FF:000001">
    <property type="entry name" value="Polyribonucleotide nucleotidyltransferase"/>
    <property type="match status" value="1"/>
</dbReference>
<dbReference type="FunFam" id="3.30.230.70:FF:000001">
    <property type="entry name" value="Polyribonucleotide nucleotidyltransferase"/>
    <property type="match status" value="1"/>
</dbReference>
<dbReference type="FunFam" id="3.30.230.70:FF:000002">
    <property type="entry name" value="Polyribonucleotide nucleotidyltransferase"/>
    <property type="match status" value="1"/>
</dbReference>
<dbReference type="Gene3D" id="3.30.230.70">
    <property type="entry name" value="GHMP Kinase, N-terminal domain"/>
    <property type="match status" value="2"/>
</dbReference>
<dbReference type="Gene3D" id="3.30.1370.10">
    <property type="entry name" value="K Homology domain, type 1"/>
    <property type="match status" value="1"/>
</dbReference>
<dbReference type="Gene3D" id="2.40.50.140">
    <property type="entry name" value="Nucleic acid-binding proteins"/>
    <property type="match status" value="1"/>
</dbReference>
<dbReference type="HAMAP" id="MF_01595">
    <property type="entry name" value="PNPase"/>
    <property type="match status" value="1"/>
</dbReference>
<dbReference type="InterPro" id="IPR001247">
    <property type="entry name" value="ExoRNase_PH_dom1"/>
</dbReference>
<dbReference type="InterPro" id="IPR015847">
    <property type="entry name" value="ExoRNase_PH_dom2"/>
</dbReference>
<dbReference type="InterPro" id="IPR036345">
    <property type="entry name" value="ExoRNase_PH_dom2_sf"/>
</dbReference>
<dbReference type="InterPro" id="IPR004087">
    <property type="entry name" value="KH_dom"/>
</dbReference>
<dbReference type="InterPro" id="IPR004088">
    <property type="entry name" value="KH_dom_type_1"/>
</dbReference>
<dbReference type="InterPro" id="IPR036612">
    <property type="entry name" value="KH_dom_type_1_sf"/>
</dbReference>
<dbReference type="InterPro" id="IPR012340">
    <property type="entry name" value="NA-bd_OB-fold"/>
</dbReference>
<dbReference type="InterPro" id="IPR012162">
    <property type="entry name" value="PNPase"/>
</dbReference>
<dbReference type="InterPro" id="IPR027408">
    <property type="entry name" value="PNPase/RNase_PH_dom_sf"/>
</dbReference>
<dbReference type="InterPro" id="IPR015848">
    <property type="entry name" value="PNPase_PH_RNA-bd_bac/org-type"/>
</dbReference>
<dbReference type="InterPro" id="IPR036456">
    <property type="entry name" value="PNPase_PH_RNA-bd_sf"/>
</dbReference>
<dbReference type="InterPro" id="IPR020568">
    <property type="entry name" value="Ribosomal_Su5_D2-typ_SF"/>
</dbReference>
<dbReference type="InterPro" id="IPR003029">
    <property type="entry name" value="S1_domain"/>
</dbReference>
<dbReference type="NCBIfam" id="TIGR03591">
    <property type="entry name" value="polynuc_phos"/>
    <property type="match status" value="1"/>
</dbReference>
<dbReference type="NCBIfam" id="NF008805">
    <property type="entry name" value="PRK11824.1"/>
    <property type="match status" value="1"/>
</dbReference>
<dbReference type="PANTHER" id="PTHR11252">
    <property type="entry name" value="POLYRIBONUCLEOTIDE NUCLEOTIDYLTRANSFERASE"/>
    <property type="match status" value="1"/>
</dbReference>
<dbReference type="PANTHER" id="PTHR11252:SF0">
    <property type="entry name" value="POLYRIBONUCLEOTIDE NUCLEOTIDYLTRANSFERASE 1, MITOCHONDRIAL"/>
    <property type="match status" value="1"/>
</dbReference>
<dbReference type="Pfam" id="PF00013">
    <property type="entry name" value="KH_1"/>
    <property type="match status" value="1"/>
</dbReference>
<dbReference type="Pfam" id="PF03726">
    <property type="entry name" value="PNPase"/>
    <property type="match status" value="1"/>
</dbReference>
<dbReference type="Pfam" id="PF01138">
    <property type="entry name" value="RNase_PH"/>
    <property type="match status" value="2"/>
</dbReference>
<dbReference type="Pfam" id="PF03725">
    <property type="entry name" value="RNase_PH_C"/>
    <property type="match status" value="2"/>
</dbReference>
<dbReference type="Pfam" id="PF00575">
    <property type="entry name" value="S1"/>
    <property type="match status" value="1"/>
</dbReference>
<dbReference type="PIRSF" id="PIRSF005499">
    <property type="entry name" value="PNPase"/>
    <property type="match status" value="1"/>
</dbReference>
<dbReference type="SMART" id="SM00322">
    <property type="entry name" value="KH"/>
    <property type="match status" value="1"/>
</dbReference>
<dbReference type="SMART" id="SM00316">
    <property type="entry name" value="S1"/>
    <property type="match status" value="1"/>
</dbReference>
<dbReference type="SUPFAM" id="SSF54791">
    <property type="entry name" value="Eukaryotic type KH-domain (KH-domain type I)"/>
    <property type="match status" value="1"/>
</dbReference>
<dbReference type="SUPFAM" id="SSF50249">
    <property type="entry name" value="Nucleic acid-binding proteins"/>
    <property type="match status" value="1"/>
</dbReference>
<dbReference type="SUPFAM" id="SSF46915">
    <property type="entry name" value="Polynucleotide phosphorylase/guanosine pentaphosphate synthase (PNPase/GPSI), domain 3"/>
    <property type="match status" value="1"/>
</dbReference>
<dbReference type="SUPFAM" id="SSF55666">
    <property type="entry name" value="Ribonuclease PH domain 2-like"/>
    <property type="match status" value="2"/>
</dbReference>
<dbReference type="SUPFAM" id="SSF54211">
    <property type="entry name" value="Ribosomal protein S5 domain 2-like"/>
    <property type="match status" value="2"/>
</dbReference>
<dbReference type="PROSITE" id="PS50084">
    <property type="entry name" value="KH_TYPE_1"/>
    <property type="match status" value="1"/>
</dbReference>
<dbReference type="PROSITE" id="PS50126">
    <property type="entry name" value="S1"/>
    <property type="match status" value="1"/>
</dbReference>
<sequence length="723" mass="79526">MSEKQVFSTEWAGKTLSVEVGQLAKQASGAALIRYGDTVVLTAAVGSKKPRPGDFFPLTVNYEEKMYSVGKVPGGFLKREGRPSDRATLTARLIDRPIRPLFAEGFRNEVQITSTVFSVDQDCSPEMAAMLGSSVALVISDIPFEGPIAGVDVGRIDGKYVINPTIEQAEKSDISLTVAGTYDAINMVEAGAKEVSEEAMLEAIMFGHEEIKRLCEFQQQIIAAVGKEKREIELFVSDPELEAEVKAASEGKMKAAIKTEEKKAREAAIEEVKEEILESYKAKELENEAEILGEVAHILEMIEKDEMRRLISQDKIRPDGRKVNEIRPLSSEVGMLPRVHGSGLFTRGQTQALSVCTLAPLREHQIIDGLGTEEYKRFMHHYNFPQFSVGETGPRRAPGRREIGHGALGERALQYVIPSEEEFPYTIRLVSEVLESNGSSSQASICGSTLAMLDAGVPIKAPVAGIAMGLVKLGDDYTILSDIQGMEDHFGDMDFKVAGTKDGITALQMDIKIDGLSRQILDEALTQAKEGRLHILEHLTSTISAPREELSAYAPKIITLNIKPEKIKDVIGPGGKQINAIIDETGVKIDIEQDGTVYIASQDQAMNRKAIAIIEDIVREVEVGEVYTGKVRRIEKFGAFVELFKGTDGLVHISELAHERVGKVEDILKLGDEVTVKVIEVDQQGRVNLSRKALLEKKEQPEGDKKPQAEKKFYPKTKKPESK</sequence>